<sequence length="193" mass="20106">MIGRIAGTLIEKNPPHLLVDCHGVGYEIDVPMSTFYNLPATGEKVALLTQQIVREDAHLLYGFGTAAERETFRQLIKISGIGARIALAVLSGMSVAELAQAVTLQEAGRLTRIPGIGKKTAERLLLELKGKLGADLGTVPGGPAVSDDAVDVLNALLALGYSDKEAAQAIKQVPAGTGVSEGIKLALKALSKG</sequence>
<keyword id="KW-0963">Cytoplasm</keyword>
<keyword id="KW-0227">DNA damage</keyword>
<keyword id="KW-0233">DNA recombination</keyword>
<keyword id="KW-0234">DNA repair</keyword>
<keyword id="KW-0238">DNA-binding</keyword>
<keyword id="KW-1185">Reference proteome</keyword>
<comment type="function">
    <text evidence="1">The RuvA-RuvB-RuvC complex processes Holliday junction (HJ) DNA during genetic recombination and DNA repair, while the RuvA-RuvB complex plays an important role in the rescue of blocked DNA replication forks via replication fork reversal (RFR). RuvA specifically binds to HJ cruciform DNA, conferring on it an open structure. The RuvB hexamer acts as an ATP-dependent pump, pulling dsDNA into and through the RuvAB complex. HJ branch migration allows RuvC to scan DNA until it finds its consensus sequence, where it cleaves and resolves the cruciform DNA.</text>
</comment>
<comment type="subunit">
    <text evidence="1">Homotetramer. Forms an RuvA(8)-RuvB(12)-Holliday junction (HJ) complex. HJ DNA is sandwiched between 2 RuvA tetramers; dsDNA enters through RuvA and exits via RuvB. An RuvB hexamer assembles on each DNA strand where it exits the tetramer. Each RuvB hexamer is contacted by two RuvA subunits (via domain III) on 2 adjacent RuvB subunits; this complex drives branch migration. In the full resolvosome a probable DNA-RuvA(4)-RuvB(12)-RuvC(2) complex forms which resolves the HJ.</text>
</comment>
<comment type="subcellular location">
    <subcellularLocation>
        <location evidence="1">Cytoplasm</location>
    </subcellularLocation>
</comment>
<comment type="domain">
    <text evidence="1">Has three domains with a flexible linker between the domains II and III and assumes an 'L' shape. Domain III is highly mobile and contacts RuvB.</text>
</comment>
<comment type="similarity">
    <text evidence="1">Belongs to the RuvA family.</text>
</comment>
<name>RUVA_RALN1</name>
<dbReference type="EMBL" id="AL646052">
    <property type="protein sequence ID" value="CAD14029.1"/>
    <property type="molecule type" value="Genomic_DNA"/>
</dbReference>
<dbReference type="RefSeq" id="WP_011000460.1">
    <property type="nucleotide sequence ID" value="NC_003295.1"/>
</dbReference>
<dbReference type="SMR" id="Q8Y235"/>
<dbReference type="STRING" id="267608.RSc0501"/>
<dbReference type="EnsemblBacteria" id="CAD14029">
    <property type="protein sequence ID" value="CAD14029"/>
    <property type="gene ID" value="RSc0501"/>
</dbReference>
<dbReference type="KEGG" id="rso:RSc0501"/>
<dbReference type="PATRIC" id="fig|267608.8.peg.522"/>
<dbReference type="eggNOG" id="COG0632">
    <property type="taxonomic scope" value="Bacteria"/>
</dbReference>
<dbReference type="HOGENOM" id="CLU_087936_0_0_4"/>
<dbReference type="Proteomes" id="UP000001436">
    <property type="component" value="Chromosome"/>
</dbReference>
<dbReference type="GO" id="GO:0005737">
    <property type="term" value="C:cytoplasm"/>
    <property type="evidence" value="ECO:0007669"/>
    <property type="project" value="UniProtKB-SubCell"/>
</dbReference>
<dbReference type="GO" id="GO:0009379">
    <property type="term" value="C:Holliday junction helicase complex"/>
    <property type="evidence" value="ECO:0007669"/>
    <property type="project" value="InterPro"/>
</dbReference>
<dbReference type="GO" id="GO:0048476">
    <property type="term" value="C:Holliday junction resolvase complex"/>
    <property type="evidence" value="ECO:0007669"/>
    <property type="project" value="UniProtKB-UniRule"/>
</dbReference>
<dbReference type="GO" id="GO:0005524">
    <property type="term" value="F:ATP binding"/>
    <property type="evidence" value="ECO:0007669"/>
    <property type="project" value="InterPro"/>
</dbReference>
<dbReference type="GO" id="GO:0000400">
    <property type="term" value="F:four-way junction DNA binding"/>
    <property type="evidence" value="ECO:0007669"/>
    <property type="project" value="UniProtKB-UniRule"/>
</dbReference>
<dbReference type="GO" id="GO:0009378">
    <property type="term" value="F:four-way junction helicase activity"/>
    <property type="evidence" value="ECO:0007669"/>
    <property type="project" value="InterPro"/>
</dbReference>
<dbReference type="GO" id="GO:0006310">
    <property type="term" value="P:DNA recombination"/>
    <property type="evidence" value="ECO:0007669"/>
    <property type="project" value="UniProtKB-UniRule"/>
</dbReference>
<dbReference type="GO" id="GO:0006281">
    <property type="term" value="P:DNA repair"/>
    <property type="evidence" value="ECO:0007669"/>
    <property type="project" value="UniProtKB-UniRule"/>
</dbReference>
<dbReference type="CDD" id="cd14332">
    <property type="entry name" value="UBA_RuvA_C"/>
    <property type="match status" value="1"/>
</dbReference>
<dbReference type="Gene3D" id="1.10.150.20">
    <property type="entry name" value="5' to 3' exonuclease, C-terminal subdomain"/>
    <property type="match status" value="1"/>
</dbReference>
<dbReference type="Gene3D" id="1.10.8.10">
    <property type="entry name" value="DNA helicase RuvA subunit, C-terminal domain"/>
    <property type="match status" value="1"/>
</dbReference>
<dbReference type="Gene3D" id="2.40.50.140">
    <property type="entry name" value="Nucleic acid-binding proteins"/>
    <property type="match status" value="1"/>
</dbReference>
<dbReference type="HAMAP" id="MF_00031">
    <property type="entry name" value="DNA_HJ_migration_RuvA"/>
    <property type="match status" value="1"/>
</dbReference>
<dbReference type="InterPro" id="IPR013849">
    <property type="entry name" value="DNA_helicase_Holl-junc_RuvA_I"/>
</dbReference>
<dbReference type="InterPro" id="IPR003583">
    <property type="entry name" value="Hlx-hairpin-Hlx_DNA-bd_motif"/>
</dbReference>
<dbReference type="InterPro" id="IPR012340">
    <property type="entry name" value="NA-bd_OB-fold"/>
</dbReference>
<dbReference type="InterPro" id="IPR000085">
    <property type="entry name" value="RuvA"/>
</dbReference>
<dbReference type="InterPro" id="IPR010994">
    <property type="entry name" value="RuvA_2-like"/>
</dbReference>
<dbReference type="InterPro" id="IPR011114">
    <property type="entry name" value="RuvA_C"/>
</dbReference>
<dbReference type="InterPro" id="IPR036267">
    <property type="entry name" value="RuvA_C_sf"/>
</dbReference>
<dbReference type="NCBIfam" id="TIGR00084">
    <property type="entry name" value="ruvA"/>
    <property type="match status" value="1"/>
</dbReference>
<dbReference type="Pfam" id="PF14520">
    <property type="entry name" value="HHH_5"/>
    <property type="match status" value="1"/>
</dbReference>
<dbReference type="Pfam" id="PF07499">
    <property type="entry name" value="RuvA_C"/>
    <property type="match status" value="1"/>
</dbReference>
<dbReference type="Pfam" id="PF01330">
    <property type="entry name" value="RuvA_N"/>
    <property type="match status" value="1"/>
</dbReference>
<dbReference type="SMART" id="SM00278">
    <property type="entry name" value="HhH1"/>
    <property type="match status" value="2"/>
</dbReference>
<dbReference type="SUPFAM" id="SSF46929">
    <property type="entry name" value="DNA helicase RuvA subunit, C-terminal domain"/>
    <property type="match status" value="1"/>
</dbReference>
<dbReference type="SUPFAM" id="SSF50249">
    <property type="entry name" value="Nucleic acid-binding proteins"/>
    <property type="match status" value="1"/>
</dbReference>
<dbReference type="SUPFAM" id="SSF47781">
    <property type="entry name" value="RuvA domain 2-like"/>
    <property type="match status" value="1"/>
</dbReference>
<accession>Q8Y235</accession>
<organism>
    <name type="scientific">Ralstonia nicotianae (strain ATCC BAA-1114 / GMI1000)</name>
    <name type="common">Ralstonia solanacearum</name>
    <dbReference type="NCBI Taxonomy" id="267608"/>
    <lineage>
        <taxon>Bacteria</taxon>
        <taxon>Pseudomonadati</taxon>
        <taxon>Pseudomonadota</taxon>
        <taxon>Betaproteobacteria</taxon>
        <taxon>Burkholderiales</taxon>
        <taxon>Burkholderiaceae</taxon>
        <taxon>Ralstonia</taxon>
        <taxon>Ralstonia solanacearum species complex</taxon>
    </lineage>
</organism>
<protein>
    <recommendedName>
        <fullName evidence="1">Holliday junction branch migration complex subunit RuvA</fullName>
    </recommendedName>
</protein>
<reference key="1">
    <citation type="journal article" date="2002" name="Nature">
        <title>Genome sequence of the plant pathogen Ralstonia solanacearum.</title>
        <authorList>
            <person name="Salanoubat M."/>
            <person name="Genin S."/>
            <person name="Artiguenave F."/>
            <person name="Gouzy J."/>
            <person name="Mangenot S."/>
            <person name="Arlat M."/>
            <person name="Billault A."/>
            <person name="Brottier P."/>
            <person name="Camus J.-C."/>
            <person name="Cattolico L."/>
            <person name="Chandler M."/>
            <person name="Choisne N."/>
            <person name="Claudel-Renard C."/>
            <person name="Cunnac S."/>
            <person name="Demange N."/>
            <person name="Gaspin C."/>
            <person name="Lavie M."/>
            <person name="Moisan A."/>
            <person name="Robert C."/>
            <person name="Saurin W."/>
            <person name="Schiex T."/>
            <person name="Siguier P."/>
            <person name="Thebault P."/>
            <person name="Whalen M."/>
            <person name="Wincker P."/>
            <person name="Levy M."/>
            <person name="Weissenbach J."/>
            <person name="Boucher C.A."/>
        </authorList>
    </citation>
    <scope>NUCLEOTIDE SEQUENCE [LARGE SCALE GENOMIC DNA]</scope>
    <source>
        <strain>ATCC BAA-1114 / GMI1000</strain>
    </source>
</reference>
<feature type="chain" id="PRO_0000094668" description="Holliday junction branch migration complex subunit RuvA">
    <location>
        <begin position="1"/>
        <end position="193"/>
    </location>
</feature>
<feature type="region of interest" description="Domain I" evidence="1">
    <location>
        <begin position="1"/>
        <end position="64"/>
    </location>
</feature>
<feature type="region of interest" description="Domain II" evidence="1">
    <location>
        <begin position="65"/>
        <end position="143"/>
    </location>
</feature>
<feature type="region of interest" description="Flexible linker" evidence="1">
    <location>
        <begin position="144"/>
        <end position="151"/>
    </location>
</feature>
<feature type="region of interest" description="Domain III" evidence="1">
    <location>
        <begin position="151"/>
        <end position="193"/>
    </location>
</feature>
<evidence type="ECO:0000255" key="1">
    <source>
        <dbReference type="HAMAP-Rule" id="MF_00031"/>
    </source>
</evidence>
<proteinExistence type="inferred from homology"/>
<gene>
    <name evidence="1" type="primary">ruvA</name>
    <name type="ordered locus">RSc0501</name>
    <name type="ORF">RS05021</name>
</gene>